<comment type="function">
    <text evidence="1">Binds directly to 23S ribosomal RNA and is necessary for the in vitro assembly process of the 50S ribosomal subunit. It is not involved in the protein synthesizing functions of that subunit.</text>
</comment>
<comment type="similarity">
    <text evidence="1">Belongs to the bacterial ribosomal protein bL20 family.</text>
</comment>
<keyword id="KW-0687">Ribonucleoprotein</keyword>
<keyword id="KW-0689">Ribosomal protein</keyword>
<keyword id="KW-0694">RNA-binding</keyword>
<keyword id="KW-0699">rRNA-binding</keyword>
<feature type="chain" id="PRO_0000243742" description="Large ribosomal subunit protein bL20">
    <location>
        <begin position="1"/>
        <end position="119"/>
    </location>
</feature>
<proteinExistence type="inferred from homology"/>
<name>RL20_STRPM</name>
<sequence>MARVKGGVVSRKRRKRILKLAKGYYGAKHILFRTAKEQVMNSYYYAYRDRRQKKRDFRKLWITRINAAARMNGLSYSQLMHGLKLAEIEVNRKMLADLAVADAAAFTALADAAKAKLGK</sequence>
<organism>
    <name type="scientific">Streptococcus pyogenes serotype M28 (strain MGAS6180)</name>
    <dbReference type="NCBI Taxonomy" id="319701"/>
    <lineage>
        <taxon>Bacteria</taxon>
        <taxon>Bacillati</taxon>
        <taxon>Bacillota</taxon>
        <taxon>Bacilli</taxon>
        <taxon>Lactobacillales</taxon>
        <taxon>Streptococcaceae</taxon>
        <taxon>Streptococcus</taxon>
    </lineage>
</organism>
<reference key="1">
    <citation type="journal article" date="2005" name="J. Infect. Dis.">
        <title>Genome sequence of a serotype M28 strain of group A Streptococcus: potential new insights into puerperal sepsis and bacterial disease specificity.</title>
        <authorList>
            <person name="Green N.M."/>
            <person name="Zhang S."/>
            <person name="Porcella S.F."/>
            <person name="Nagiec M.J."/>
            <person name="Barbian K.D."/>
            <person name="Beres S.B."/>
            <person name="Lefebvre R.B."/>
            <person name="Musser J.M."/>
        </authorList>
    </citation>
    <scope>NUCLEOTIDE SEQUENCE [LARGE SCALE GENOMIC DNA]</scope>
    <source>
        <strain>MGAS6180</strain>
    </source>
</reference>
<protein>
    <recommendedName>
        <fullName evidence="1">Large ribosomal subunit protein bL20</fullName>
    </recommendedName>
    <alternativeName>
        <fullName evidence="2">50S ribosomal protein L20</fullName>
    </alternativeName>
</protein>
<dbReference type="EMBL" id="CP000056">
    <property type="protein sequence ID" value="AAX71714.1"/>
    <property type="molecule type" value="Genomic_DNA"/>
</dbReference>
<dbReference type="RefSeq" id="WP_002985149.1">
    <property type="nucleotide sequence ID" value="NC_007296.2"/>
</dbReference>
<dbReference type="SMR" id="Q48U92"/>
<dbReference type="GeneID" id="69901075"/>
<dbReference type="KEGG" id="spb:M28_Spy0600"/>
<dbReference type="HOGENOM" id="CLU_123265_0_1_9"/>
<dbReference type="GO" id="GO:1990904">
    <property type="term" value="C:ribonucleoprotein complex"/>
    <property type="evidence" value="ECO:0007669"/>
    <property type="project" value="UniProtKB-KW"/>
</dbReference>
<dbReference type="GO" id="GO:0005840">
    <property type="term" value="C:ribosome"/>
    <property type="evidence" value="ECO:0007669"/>
    <property type="project" value="UniProtKB-KW"/>
</dbReference>
<dbReference type="GO" id="GO:0019843">
    <property type="term" value="F:rRNA binding"/>
    <property type="evidence" value="ECO:0007669"/>
    <property type="project" value="UniProtKB-UniRule"/>
</dbReference>
<dbReference type="GO" id="GO:0003735">
    <property type="term" value="F:structural constituent of ribosome"/>
    <property type="evidence" value="ECO:0007669"/>
    <property type="project" value="InterPro"/>
</dbReference>
<dbReference type="GO" id="GO:0000027">
    <property type="term" value="P:ribosomal large subunit assembly"/>
    <property type="evidence" value="ECO:0007669"/>
    <property type="project" value="UniProtKB-UniRule"/>
</dbReference>
<dbReference type="GO" id="GO:0006412">
    <property type="term" value="P:translation"/>
    <property type="evidence" value="ECO:0007669"/>
    <property type="project" value="InterPro"/>
</dbReference>
<dbReference type="CDD" id="cd07026">
    <property type="entry name" value="Ribosomal_L20"/>
    <property type="match status" value="1"/>
</dbReference>
<dbReference type="FunFam" id="1.10.1900.20:FF:000001">
    <property type="entry name" value="50S ribosomal protein L20"/>
    <property type="match status" value="1"/>
</dbReference>
<dbReference type="Gene3D" id="6.10.160.10">
    <property type="match status" value="1"/>
</dbReference>
<dbReference type="Gene3D" id="1.10.1900.20">
    <property type="entry name" value="Ribosomal protein L20"/>
    <property type="match status" value="1"/>
</dbReference>
<dbReference type="HAMAP" id="MF_00382">
    <property type="entry name" value="Ribosomal_bL20"/>
    <property type="match status" value="1"/>
</dbReference>
<dbReference type="InterPro" id="IPR005813">
    <property type="entry name" value="Ribosomal_bL20"/>
</dbReference>
<dbReference type="InterPro" id="IPR049946">
    <property type="entry name" value="RIBOSOMAL_L20_CS"/>
</dbReference>
<dbReference type="InterPro" id="IPR035566">
    <property type="entry name" value="Ribosomal_protein_bL20_C"/>
</dbReference>
<dbReference type="NCBIfam" id="TIGR01032">
    <property type="entry name" value="rplT_bact"/>
    <property type="match status" value="1"/>
</dbReference>
<dbReference type="PANTHER" id="PTHR10986">
    <property type="entry name" value="39S RIBOSOMAL PROTEIN L20"/>
    <property type="match status" value="1"/>
</dbReference>
<dbReference type="Pfam" id="PF00453">
    <property type="entry name" value="Ribosomal_L20"/>
    <property type="match status" value="1"/>
</dbReference>
<dbReference type="PRINTS" id="PR00062">
    <property type="entry name" value="RIBOSOMALL20"/>
</dbReference>
<dbReference type="SUPFAM" id="SSF74731">
    <property type="entry name" value="Ribosomal protein L20"/>
    <property type="match status" value="1"/>
</dbReference>
<dbReference type="PROSITE" id="PS00937">
    <property type="entry name" value="RIBOSOMAL_L20"/>
    <property type="match status" value="1"/>
</dbReference>
<evidence type="ECO:0000255" key="1">
    <source>
        <dbReference type="HAMAP-Rule" id="MF_00382"/>
    </source>
</evidence>
<evidence type="ECO:0000305" key="2"/>
<accession>Q48U92</accession>
<gene>
    <name evidence="1" type="primary">rplT</name>
    <name type="ordered locus">M28_Spy0600</name>
</gene>